<name>PYRD_COREF</name>
<keyword id="KW-1003">Cell membrane</keyword>
<keyword id="KW-0285">Flavoprotein</keyword>
<keyword id="KW-0288">FMN</keyword>
<keyword id="KW-0472">Membrane</keyword>
<keyword id="KW-0560">Oxidoreductase</keyword>
<keyword id="KW-0665">Pyrimidine biosynthesis</keyword>
<keyword id="KW-1185">Reference proteome</keyword>
<sequence length="377" mass="39557">MSSSSPAGTARTIRKKVYDASLKAMFTLRPERIHGIIADGLGVLQMATPVNRAMGRVIGVNDPVLSQEVFGVTFPRPLGLAAGFDKNATAADTWTALGFGYAELGTVTASPQAGNPTPRLFRLPADRAILNRMGFNNAGAADVADNLRRRKSRDVIGINIGKTKVVPAEQAVDDYRRSASLLGDLADYLVVNVSSPNTPGLRDLQAVESLRPILAAVQESTSVPVLVKIAPDLSDEDVDAVADLAVELGLAGIVATNTTISREGLVTPAHEVAEMGAGGISGPPVAERALEVLRRLHARVGDQLVLIGVGGISTPEQAWERIAAGATLLQGYTGFIYGGPDWIRDIHLGLAEQVKAHGLSNISEAVGSGLPWKDSAV</sequence>
<organism>
    <name type="scientific">Corynebacterium efficiens (strain DSM 44549 / YS-314 / AJ 12310 / JCM 11189 / NBRC 100395)</name>
    <dbReference type="NCBI Taxonomy" id="196164"/>
    <lineage>
        <taxon>Bacteria</taxon>
        <taxon>Bacillati</taxon>
        <taxon>Actinomycetota</taxon>
        <taxon>Actinomycetes</taxon>
        <taxon>Mycobacteriales</taxon>
        <taxon>Corynebacteriaceae</taxon>
        <taxon>Corynebacterium</taxon>
    </lineage>
</organism>
<accession>Q8FTC6</accession>
<feature type="chain" id="PRO_0000148432" description="Dihydroorotate dehydrogenase (quinone)">
    <location>
        <begin position="1"/>
        <end position="377"/>
    </location>
</feature>
<feature type="active site" description="Nucleophile" evidence="1">
    <location>
        <position position="195"/>
    </location>
</feature>
<feature type="binding site" evidence="1">
    <location>
        <begin position="82"/>
        <end position="86"/>
    </location>
    <ligand>
        <name>FMN</name>
        <dbReference type="ChEBI" id="CHEBI:58210"/>
    </ligand>
</feature>
<feature type="binding site" evidence="1">
    <location>
        <position position="86"/>
    </location>
    <ligand>
        <name>substrate</name>
    </ligand>
</feature>
<feature type="binding site" evidence="1">
    <location>
        <position position="106"/>
    </location>
    <ligand>
        <name>FMN</name>
        <dbReference type="ChEBI" id="CHEBI:58210"/>
    </ligand>
</feature>
<feature type="binding site" evidence="1">
    <location>
        <begin position="131"/>
        <end position="135"/>
    </location>
    <ligand>
        <name>substrate</name>
    </ligand>
</feature>
<feature type="binding site" evidence="1">
    <location>
        <position position="159"/>
    </location>
    <ligand>
        <name>FMN</name>
        <dbReference type="ChEBI" id="CHEBI:58210"/>
    </ligand>
</feature>
<feature type="binding site" evidence="1">
    <location>
        <position position="192"/>
    </location>
    <ligand>
        <name>FMN</name>
        <dbReference type="ChEBI" id="CHEBI:58210"/>
    </ligand>
</feature>
<feature type="binding site" evidence="1">
    <location>
        <position position="192"/>
    </location>
    <ligand>
        <name>substrate</name>
    </ligand>
</feature>
<feature type="binding site" evidence="1">
    <location>
        <position position="197"/>
    </location>
    <ligand>
        <name>substrate</name>
    </ligand>
</feature>
<feature type="binding site" evidence="1">
    <location>
        <position position="228"/>
    </location>
    <ligand>
        <name>FMN</name>
        <dbReference type="ChEBI" id="CHEBI:58210"/>
    </ligand>
</feature>
<feature type="binding site" evidence="1">
    <location>
        <position position="256"/>
    </location>
    <ligand>
        <name>FMN</name>
        <dbReference type="ChEBI" id="CHEBI:58210"/>
    </ligand>
</feature>
<feature type="binding site" evidence="1">
    <location>
        <begin position="257"/>
        <end position="258"/>
    </location>
    <ligand>
        <name>substrate</name>
    </ligand>
</feature>
<feature type="binding site" evidence="1">
    <location>
        <position position="282"/>
    </location>
    <ligand>
        <name>FMN</name>
        <dbReference type="ChEBI" id="CHEBI:58210"/>
    </ligand>
</feature>
<feature type="binding site" evidence="1">
    <location>
        <position position="311"/>
    </location>
    <ligand>
        <name>FMN</name>
        <dbReference type="ChEBI" id="CHEBI:58210"/>
    </ligand>
</feature>
<feature type="binding site" evidence="1">
    <location>
        <begin position="332"/>
        <end position="333"/>
    </location>
    <ligand>
        <name>FMN</name>
        <dbReference type="ChEBI" id="CHEBI:58210"/>
    </ligand>
</feature>
<dbReference type="EC" id="1.3.5.2" evidence="1"/>
<dbReference type="EMBL" id="BA000035">
    <property type="protein sequence ID" value="BAC18453.1"/>
    <property type="status" value="ALT_INIT"/>
    <property type="molecule type" value="Genomic_DNA"/>
</dbReference>
<dbReference type="RefSeq" id="WP_006767643.1">
    <property type="nucleotide sequence ID" value="NC_004369.1"/>
</dbReference>
<dbReference type="SMR" id="Q8FTC6"/>
<dbReference type="STRING" id="196164.gene:10742062"/>
<dbReference type="KEGG" id="cef:CE1643"/>
<dbReference type="eggNOG" id="COG0167">
    <property type="taxonomic scope" value="Bacteria"/>
</dbReference>
<dbReference type="HOGENOM" id="CLU_013640_2_0_11"/>
<dbReference type="OrthoDB" id="9802377at2"/>
<dbReference type="UniPathway" id="UPA00070">
    <property type="reaction ID" value="UER00946"/>
</dbReference>
<dbReference type="Proteomes" id="UP000001409">
    <property type="component" value="Chromosome"/>
</dbReference>
<dbReference type="GO" id="GO:0005737">
    <property type="term" value="C:cytoplasm"/>
    <property type="evidence" value="ECO:0007669"/>
    <property type="project" value="InterPro"/>
</dbReference>
<dbReference type="GO" id="GO:0005886">
    <property type="term" value="C:plasma membrane"/>
    <property type="evidence" value="ECO:0007669"/>
    <property type="project" value="UniProtKB-SubCell"/>
</dbReference>
<dbReference type="GO" id="GO:0106430">
    <property type="term" value="F:dihydroorotate dehydrogenase (quinone) activity"/>
    <property type="evidence" value="ECO:0007669"/>
    <property type="project" value="UniProtKB-EC"/>
</dbReference>
<dbReference type="GO" id="GO:0006207">
    <property type="term" value="P:'de novo' pyrimidine nucleobase biosynthetic process"/>
    <property type="evidence" value="ECO:0007669"/>
    <property type="project" value="InterPro"/>
</dbReference>
<dbReference type="GO" id="GO:0044205">
    <property type="term" value="P:'de novo' UMP biosynthetic process"/>
    <property type="evidence" value="ECO:0007669"/>
    <property type="project" value="UniProtKB-UniRule"/>
</dbReference>
<dbReference type="CDD" id="cd04738">
    <property type="entry name" value="DHOD_2_like"/>
    <property type="match status" value="1"/>
</dbReference>
<dbReference type="FunFam" id="3.20.20.70:FF:000123">
    <property type="entry name" value="Dihydroorotate dehydrogenase (quinone)"/>
    <property type="match status" value="1"/>
</dbReference>
<dbReference type="Gene3D" id="3.20.20.70">
    <property type="entry name" value="Aldolase class I"/>
    <property type="match status" value="1"/>
</dbReference>
<dbReference type="HAMAP" id="MF_00225">
    <property type="entry name" value="DHO_dh_type2"/>
    <property type="match status" value="1"/>
</dbReference>
<dbReference type="InterPro" id="IPR013785">
    <property type="entry name" value="Aldolase_TIM"/>
</dbReference>
<dbReference type="InterPro" id="IPR050074">
    <property type="entry name" value="DHO_dehydrogenase"/>
</dbReference>
<dbReference type="InterPro" id="IPR005719">
    <property type="entry name" value="Dihydroorotate_DH_2"/>
</dbReference>
<dbReference type="InterPro" id="IPR005720">
    <property type="entry name" value="Dihydroorotate_DH_cat"/>
</dbReference>
<dbReference type="InterPro" id="IPR001295">
    <property type="entry name" value="Dihydroorotate_DH_CS"/>
</dbReference>
<dbReference type="NCBIfam" id="NF003645">
    <property type="entry name" value="PRK05286.1-2"/>
    <property type="match status" value="1"/>
</dbReference>
<dbReference type="NCBIfam" id="NF003648">
    <property type="entry name" value="PRK05286.2-1"/>
    <property type="match status" value="1"/>
</dbReference>
<dbReference type="NCBIfam" id="NF003652">
    <property type="entry name" value="PRK05286.2-5"/>
    <property type="match status" value="1"/>
</dbReference>
<dbReference type="NCBIfam" id="TIGR01036">
    <property type="entry name" value="pyrD_sub2"/>
    <property type="match status" value="1"/>
</dbReference>
<dbReference type="PANTHER" id="PTHR48109:SF4">
    <property type="entry name" value="DIHYDROOROTATE DEHYDROGENASE (QUINONE), MITOCHONDRIAL"/>
    <property type="match status" value="1"/>
</dbReference>
<dbReference type="PANTHER" id="PTHR48109">
    <property type="entry name" value="DIHYDROOROTATE DEHYDROGENASE (QUINONE), MITOCHONDRIAL-RELATED"/>
    <property type="match status" value="1"/>
</dbReference>
<dbReference type="Pfam" id="PF01180">
    <property type="entry name" value="DHO_dh"/>
    <property type="match status" value="1"/>
</dbReference>
<dbReference type="SUPFAM" id="SSF51395">
    <property type="entry name" value="FMN-linked oxidoreductases"/>
    <property type="match status" value="1"/>
</dbReference>
<dbReference type="PROSITE" id="PS00911">
    <property type="entry name" value="DHODEHASE_1"/>
    <property type="match status" value="1"/>
</dbReference>
<dbReference type="PROSITE" id="PS00912">
    <property type="entry name" value="DHODEHASE_2"/>
    <property type="match status" value="1"/>
</dbReference>
<protein>
    <recommendedName>
        <fullName evidence="1">Dihydroorotate dehydrogenase (quinone)</fullName>
        <ecNumber evidence="1">1.3.5.2</ecNumber>
    </recommendedName>
    <alternativeName>
        <fullName evidence="1">DHOdehase</fullName>
        <shortName evidence="1">DHOD</shortName>
        <shortName evidence="1">DHODase</shortName>
    </alternativeName>
    <alternativeName>
        <fullName evidence="1">Dihydroorotate oxidase</fullName>
    </alternativeName>
</protein>
<gene>
    <name evidence="1" type="primary">pyrD</name>
    <name type="ordered locus">CE1643</name>
</gene>
<proteinExistence type="inferred from homology"/>
<reference key="1">
    <citation type="journal article" date="2003" name="Genome Res.">
        <title>Comparative complete genome sequence analysis of the amino acid replacements responsible for the thermostability of Corynebacterium efficiens.</title>
        <authorList>
            <person name="Nishio Y."/>
            <person name="Nakamura Y."/>
            <person name="Kawarabayasi Y."/>
            <person name="Usuda Y."/>
            <person name="Kimura E."/>
            <person name="Sugimoto S."/>
            <person name="Matsui K."/>
            <person name="Yamagishi A."/>
            <person name="Kikuchi H."/>
            <person name="Ikeo K."/>
            <person name="Gojobori T."/>
        </authorList>
    </citation>
    <scope>NUCLEOTIDE SEQUENCE [LARGE SCALE GENOMIC DNA]</scope>
    <source>
        <strain>DSM 44549 / YS-314 / AJ 12310 / JCM 11189 / NBRC 100395</strain>
    </source>
</reference>
<comment type="function">
    <text evidence="1">Catalyzes the conversion of dihydroorotate to orotate with quinone as electron acceptor.</text>
</comment>
<comment type="catalytic activity">
    <reaction evidence="1">
        <text>(S)-dihydroorotate + a quinone = orotate + a quinol</text>
        <dbReference type="Rhea" id="RHEA:30187"/>
        <dbReference type="ChEBI" id="CHEBI:24646"/>
        <dbReference type="ChEBI" id="CHEBI:30839"/>
        <dbReference type="ChEBI" id="CHEBI:30864"/>
        <dbReference type="ChEBI" id="CHEBI:132124"/>
        <dbReference type="EC" id="1.3.5.2"/>
    </reaction>
</comment>
<comment type="cofactor">
    <cofactor evidence="1">
        <name>FMN</name>
        <dbReference type="ChEBI" id="CHEBI:58210"/>
    </cofactor>
    <text evidence="1">Binds 1 FMN per subunit.</text>
</comment>
<comment type="pathway">
    <text evidence="1">Pyrimidine metabolism; UMP biosynthesis via de novo pathway; orotate from (S)-dihydroorotate (quinone route): step 1/1.</text>
</comment>
<comment type="subunit">
    <text evidence="1">Monomer.</text>
</comment>
<comment type="subcellular location">
    <subcellularLocation>
        <location evidence="1">Cell membrane</location>
        <topology evidence="1">Peripheral membrane protein</topology>
    </subcellularLocation>
</comment>
<comment type="similarity">
    <text evidence="1">Belongs to the dihydroorotate dehydrogenase family. Type 2 subfamily.</text>
</comment>
<comment type="sequence caution" evidence="2">
    <conflict type="erroneous initiation">
        <sequence resource="EMBL-CDS" id="BAC18453"/>
    </conflict>
</comment>
<evidence type="ECO:0000255" key="1">
    <source>
        <dbReference type="HAMAP-Rule" id="MF_00225"/>
    </source>
</evidence>
<evidence type="ECO:0000305" key="2"/>